<organism>
    <name type="scientific">Danio rerio</name>
    <name type="common">Zebrafish</name>
    <name type="synonym">Brachydanio rerio</name>
    <dbReference type="NCBI Taxonomy" id="7955"/>
    <lineage>
        <taxon>Eukaryota</taxon>
        <taxon>Metazoa</taxon>
        <taxon>Chordata</taxon>
        <taxon>Craniata</taxon>
        <taxon>Vertebrata</taxon>
        <taxon>Euteleostomi</taxon>
        <taxon>Actinopterygii</taxon>
        <taxon>Neopterygii</taxon>
        <taxon>Teleostei</taxon>
        <taxon>Ostariophysi</taxon>
        <taxon>Cypriniformes</taxon>
        <taxon>Danionidae</taxon>
        <taxon>Danioninae</taxon>
        <taxon>Danio</taxon>
    </lineage>
</organism>
<keyword id="KW-0966">Cell projection</keyword>
<keyword id="KW-0137">Centromere</keyword>
<keyword id="KW-0158">Chromosome</keyword>
<keyword id="KW-0970">Cilium biogenesis/degradation</keyword>
<keyword id="KW-0175">Coiled coil</keyword>
<keyword id="KW-0963">Cytoplasm</keyword>
<keyword id="KW-0968">Cytoplasmic vesicle</keyword>
<keyword id="KW-0206">Cytoskeleton</keyword>
<keyword id="KW-0221">Differentiation</keyword>
<keyword id="KW-1185">Reference proteome</keyword>
<keyword id="KW-0813">Transport</keyword>
<comment type="function">
    <text evidence="2 5 7">Cilium-specific protein required for the regulation of cilium/flagellum formation (PubMed:19254375). Involved in centriole duplication (By similarity). May play a role in melanosome trafficking (PubMed:24550735).</text>
</comment>
<comment type="subcellular location">
    <subcellularLocation>
        <location evidence="5">Chromosome</location>
        <location evidence="5">Centromere</location>
    </subcellularLocation>
    <subcellularLocation>
        <location evidence="2">Cytoplasm</location>
        <location evidence="2">Cytoskeleton</location>
        <location evidence="2">Microtubule organizing center</location>
        <location evidence="2">Centrosome</location>
        <location evidence="2">Centriolar satellite</location>
    </subcellularLocation>
    <subcellularLocation>
        <location>Cytoplasm</location>
        <location>Cytoskeleton</location>
        <location>Cilium basal body</location>
    </subcellularLocation>
    <subcellularLocation>
        <location evidence="1">Cytoplasmic vesicle</location>
        <location evidence="1">Secretory vesicle</location>
        <location evidence="1">Acrosome</location>
    </subcellularLocation>
</comment>
<comment type="developmental stage">
    <text evidence="5">Expressed in cilia cells in the spinal canal, pronephros and Kupffer's vesicle.</text>
</comment>
<comment type="disruption phenotype">
    <text evidence="5">Morpholino knockdown of the protein leads to truncated cilia formation and impaired intraflagellar transport processes.</text>
</comment>
<comment type="similarity">
    <text evidence="6">Belongs to the CEP131 family.</text>
</comment>
<accession>U3JAG9</accession>
<accession>Q08CN2</accession>
<feature type="chain" id="PRO_0000429319" description="Centrosomal protein of 131 kDa">
    <location>
        <begin position="1"/>
        <end position="1113"/>
    </location>
</feature>
<feature type="domain" description="IQ">
    <location>
        <begin position="276"/>
        <end position="296"/>
    </location>
</feature>
<feature type="region of interest" description="Disordered" evidence="4">
    <location>
        <begin position="78"/>
        <end position="97"/>
    </location>
</feature>
<feature type="region of interest" description="Disordered" evidence="4">
    <location>
        <begin position="232"/>
        <end position="267"/>
    </location>
</feature>
<feature type="region of interest" description="Disordered" evidence="4">
    <location>
        <begin position="306"/>
        <end position="331"/>
    </location>
</feature>
<feature type="region of interest" description="Disordered" evidence="4">
    <location>
        <begin position="368"/>
        <end position="401"/>
    </location>
</feature>
<feature type="region of interest" description="Disordered" evidence="4">
    <location>
        <begin position="438"/>
        <end position="458"/>
    </location>
</feature>
<feature type="coiled-coil region" evidence="3">
    <location>
        <begin position="259"/>
        <end position="371"/>
    </location>
</feature>
<feature type="coiled-coil region" evidence="3">
    <location>
        <begin position="580"/>
        <end position="1111"/>
    </location>
</feature>
<feature type="compositionally biased region" description="Polar residues" evidence="4">
    <location>
        <begin position="79"/>
        <end position="97"/>
    </location>
</feature>
<feature type="compositionally biased region" description="Low complexity" evidence="4">
    <location>
        <begin position="238"/>
        <end position="257"/>
    </location>
</feature>
<feature type="compositionally biased region" description="Basic and acidic residues" evidence="4">
    <location>
        <begin position="307"/>
        <end position="331"/>
    </location>
</feature>
<feature type="compositionally biased region" description="Basic residues" evidence="4">
    <location>
        <begin position="374"/>
        <end position="384"/>
    </location>
</feature>
<feature type="compositionally biased region" description="Low complexity" evidence="4">
    <location>
        <begin position="446"/>
        <end position="458"/>
    </location>
</feature>
<feature type="sequence conflict" description="In Ref. 2; AAI24168." evidence="6" ref="2">
    <original>A</original>
    <variation>T</variation>
    <location>
        <position position="188"/>
    </location>
</feature>
<feature type="sequence conflict" description="In Ref. 2; AAI24168." evidence="6" ref="2">
    <original>Q</original>
    <variation>R</variation>
    <location>
        <position position="234"/>
    </location>
</feature>
<feature type="sequence conflict" description="In Ref. 2; AAI24168." evidence="6" ref="2">
    <original>I</original>
    <variation>T</variation>
    <location>
        <position position="299"/>
    </location>
</feature>
<feature type="sequence conflict" description="In Ref. 2; AAI24168." evidence="6" ref="2">
    <original>K</original>
    <variation>R</variation>
    <location>
        <position position="308"/>
    </location>
</feature>
<feature type="sequence conflict" description="In Ref. 2; AAI24168." evidence="6" ref="2">
    <original>A</original>
    <variation>P</variation>
    <location>
        <position position="365"/>
    </location>
</feature>
<feature type="sequence conflict" description="In Ref. 2; AAI24168." evidence="6" ref="2">
    <original>K</original>
    <variation>R</variation>
    <location>
        <position position="746"/>
    </location>
</feature>
<name>CP131_DANRE</name>
<proteinExistence type="evidence at protein level"/>
<protein>
    <recommendedName>
        <fullName>Centrosomal protein of 131 kDa</fullName>
    </recommendedName>
    <alternativeName>
        <fullName>5-azacytidine-induced protein 1</fullName>
    </alternativeName>
</protein>
<evidence type="ECO:0000250" key="1">
    <source>
        <dbReference type="UniProtKB" id="Q62036"/>
    </source>
</evidence>
<evidence type="ECO:0000250" key="2">
    <source>
        <dbReference type="UniProtKB" id="Q9UPN4"/>
    </source>
</evidence>
<evidence type="ECO:0000255" key="3"/>
<evidence type="ECO:0000256" key="4">
    <source>
        <dbReference type="SAM" id="MobiDB-lite"/>
    </source>
</evidence>
<evidence type="ECO:0000269" key="5">
    <source>
    </source>
</evidence>
<evidence type="ECO:0000305" key="6"/>
<evidence type="ECO:0000305" key="7">
    <source>
    </source>
</evidence>
<reference key="1">
    <citation type="journal article" date="2013" name="Nature">
        <title>The zebrafish reference genome sequence and its relationship to the human genome.</title>
        <authorList>
            <person name="Howe K."/>
            <person name="Clark M.D."/>
            <person name="Torroja C.F."/>
            <person name="Torrance J."/>
            <person name="Berthelot C."/>
            <person name="Muffato M."/>
            <person name="Collins J.E."/>
            <person name="Humphray S."/>
            <person name="McLaren K."/>
            <person name="Matthews L."/>
            <person name="McLaren S."/>
            <person name="Sealy I."/>
            <person name="Caccamo M."/>
            <person name="Churcher C."/>
            <person name="Scott C."/>
            <person name="Barrett J.C."/>
            <person name="Koch R."/>
            <person name="Rauch G.J."/>
            <person name="White S."/>
            <person name="Chow W."/>
            <person name="Kilian B."/>
            <person name="Quintais L.T."/>
            <person name="Guerra-Assuncao J.A."/>
            <person name="Zhou Y."/>
            <person name="Gu Y."/>
            <person name="Yen J."/>
            <person name="Vogel J.H."/>
            <person name="Eyre T."/>
            <person name="Redmond S."/>
            <person name="Banerjee R."/>
            <person name="Chi J."/>
            <person name="Fu B."/>
            <person name="Langley E."/>
            <person name="Maguire S.F."/>
            <person name="Laird G.K."/>
            <person name="Lloyd D."/>
            <person name="Kenyon E."/>
            <person name="Donaldson S."/>
            <person name="Sehra H."/>
            <person name="Almeida-King J."/>
            <person name="Loveland J."/>
            <person name="Trevanion S."/>
            <person name="Jones M."/>
            <person name="Quail M."/>
            <person name="Willey D."/>
            <person name="Hunt A."/>
            <person name="Burton J."/>
            <person name="Sims S."/>
            <person name="McLay K."/>
            <person name="Plumb B."/>
            <person name="Davis J."/>
            <person name="Clee C."/>
            <person name="Oliver K."/>
            <person name="Clark R."/>
            <person name="Riddle C."/>
            <person name="Elliot D."/>
            <person name="Threadgold G."/>
            <person name="Harden G."/>
            <person name="Ware D."/>
            <person name="Begum S."/>
            <person name="Mortimore B."/>
            <person name="Kerry G."/>
            <person name="Heath P."/>
            <person name="Phillimore B."/>
            <person name="Tracey A."/>
            <person name="Corby N."/>
            <person name="Dunn M."/>
            <person name="Johnson C."/>
            <person name="Wood J."/>
            <person name="Clark S."/>
            <person name="Pelan S."/>
            <person name="Griffiths G."/>
            <person name="Smith M."/>
            <person name="Glithero R."/>
            <person name="Howden P."/>
            <person name="Barker N."/>
            <person name="Lloyd C."/>
            <person name="Stevens C."/>
            <person name="Harley J."/>
            <person name="Holt K."/>
            <person name="Panagiotidis G."/>
            <person name="Lovell J."/>
            <person name="Beasley H."/>
            <person name="Henderson C."/>
            <person name="Gordon D."/>
            <person name="Auger K."/>
            <person name="Wright D."/>
            <person name="Collins J."/>
            <person name="Raisen C."/>
            <person name="Dyer L."/>
            <person name="Leung K."/>
            <person name="Robertson L."/>
            <person name="Ambridge K."/>
            <person name="Leongamornlert D."/>
            <person name="McGuire S."/>
            <person name="Gilderthorp R."/>
            <person name="Griffiths C."/>
            <person name="Manthravadi D."/>
            <person name="Nichol S."/>
            <person name="Barker G."/>
            <person name="Whitehead S."/>
            <person name="Kay M."/>
            <person name="Brown J."/>
            <person name="Murnane C."/>
            <person name="Gray E."/>
            <person name="Humphries M."/>
            <person name="Sycamore N."/>
            <person name="Barker D."/>
            <person name="Saunders D."/>
            <person name="Wallis J."/>
            <person name="Babbage A."/>
            <person name="Hammond S."/>
            <person name="Mashreghi-Mohammadi M."/>
            <person name="Barr L."/>
            <person name="Martin S."/>
            <person name="Wray P."/>
            <person name="Ellington A."/>
            <person name="Matthews N."/>
            <person name="Ellwood M."/>
            <person name="Woodmansey R."/>
            <person name="Clark G."/>
            <person name="Cooper J."/>
            <person name="Tromans A."/>
            <person name="Grafham D."/>
            <person name="Skuce C."/>
            <person name="Pandian R."/>
            <person name="Andrews R."/>
            <person name="Harrison E."/>
            <person name="Kimberley A."/>
            <person name="Garnett J."/>
            <person name="Fosker N."/>
            <person name="Hall R."/>
            <person name="Garner P."/>
            <person name="Kelly D."/>
            <person name="Bird C."/>
            <person name="Palmer S."/>
            <person name="Gehring I."/>
            <person name="Berger A."/>
            <person name="Dooley C.M."/>
            <person name="Ersan-Urun Z."/>
            <person name="Eser C."/>
            <person name="Geiger H."/>
            <person name="Geisler M."/>
            <person name="Karotki L."/>
            <person name="Kirn A."/>
            <person name="Konantz J."/>
            <person name="Konantz M."/>
            <person name="Oberlander M."/>
            <person name="Rudolph-Geiger S."/>
            <person name="Teucke M."/>
            <person name="Lanz C."/>
            <person name="Raddatz G."/>
            <person name="Osoegawa K."/>
            <person name="Zhu B."/>
            <person name="Rapp A."/>
            <person name="Widaa S."/>
            <person name="Langford C."/>
            <person name="Yang F."/>
            <person name="Schuster S.C."/>
            <person name="Carter N.P."/>
            <person name="Harrow J."/>
            <person name="Ning Z."/>
            <person name="Herrero J."/>
            <person name="Searle S.M."/>
            <person name="Enright A."/>
            <person name="Geisler R."/>
            <person name="Plasterk R.H."/>
            <person name="Lee C."/>
            <person name="Westerfield M."/>
            <person name="de Jong P.J."/>
            <person name="Zon L.I."/>
            <person name="Postlethwait J.H."/>
            <person name="Nusslein-Volhard C."/>
            <person name="Hubbard T.J."/>
            <person name="Roest Crollius H."/>
            <person name="Rogers J."/>
            <person name="Stemple D.L."/>
        </authorList>
    </citation>
    <scope>NUCLEOTIDE SEQUENCE [LARGE SCALE GENOMIC DNA]</scope>
    <source>
        <strain>Tuebingen</strain>
    </source>
</reference>
<reference key="2">
    <citation type="submission" date="2006-09" db="EMBL/GenBank/DDBJ databases">
        <authorList>
            <consortium name="NIH - Zebrafish Gene Collection (ZGC) project"/>
        </authorList>
    </citation>
    <scope>NUCLEOTIDE SEQUENCE [LARGE SCALE MRNA] OF 1-779</scope>
    <source>
        <strain>AB</strain>
    </source>
</reference>
<reference key="3">
    <citation type="journal article" date="2009" name="BMC Cell Biol.">
        <title>Cep70 and Cep131 contribute to ciliogenesis in zebrafish embryos.</title>
        <authorList>
            <person name="Wilkinson C.J."/>
            <person name="Carl M."/>
            <person name="Harris W.A."/>
        </authorList>
    </citation>
    <scope>FUNCTION IN CILIOGENESIS</scope>
    <scope>SUBCELLULAR LOCATION</scope>
    <scope>DISRUPTION PHENOTYPE</scope>
    <scope>DEVELOPMENTAL STAGE</scope>
</reference>
<reference key="4">
    <citation type="journal article" date="2014" name="PLoS Genet.">
        <title>The centriolar satellite protein AZI1 interacts with BBS4 and regulates ciliary trafficking of the BBSome.</title>
        <authorList>
            <person name="Chamling X."/>
            <person name="Seo S."/>
            <person name="Searby C.C."/>
            <person name="Kim G."/>
            <person name="Slusarski D.C."/>
            <person name="Sheffield V.C."/>
        </authorList>
    </citation>
    <scope>POSSIBLE FUNCTION IN MELANOSOME TRAFFICKING</scope>
</reference>
<sequence length="1113" mass="128302">MHTTRSPSASIQAGAAGDALDLSLNGSQLTMGRRPSSASPGKHFSRSISVSVAYDGRGKRNTLTDAGLGSSRAIKNLRRSNSTTQVNQQANTSLSSEGHTEDFLALFNSSSDGRRKLASLSKMSKDRTTWNILDDQPRVFPVPSSSHSTCSMDSPTGLKKREAGVSLAANFTANNRSNKAAVGNAVTAILHNNHSEKPLTPKSSNQKPSFNNLIKATVNDDVTLDVSGSLTKSQKNFSSASSSSNNNAPRSPRSPGQPRRREVTEEEAERYIQQVNHAAIIIQRWYRRHVNSKRANENIIKQLLASKKKEREQRAEEAKTTESLKKKEDDRKRIREEKARLARLTAIQELQQKRAQRAAEVQQIAEQETEALRHPGKVGRKKLTKSSPTSPTDIKAKNTDSNVNVVSDLDDVTNLRAASPAGSACRVSQCSQEILQRSVSMEDQRQGASSSRAQSKTTLNDLLDTLKLLEEEPERLSEPKSYRKDKYSWIDEDGDSNSLTTDNVERHRQLSQTPALPDGGALLSEAKLQSIMSFLDEMEKSEQERPRSVTSGSHREVVLSEEDLAVVEQASATAAEVTGSMMRLRLELDEKKRTVNMLQTALAQQRELTIRHVKETEKELNHTFQLQKEQYEATIQRHLTFIDQLIDDKKALSERCEEVVGELKQVDQKYTKKIAQMQEQHELVWQILGPMCEEIKKLKELMSATEKVRREKWINEKTKKIKEITVKGLEPEIQKLISKHKQELKKLRVLHEAELLQADERAAQRYVRQSEELRQQLEKEKDEQCQRERELAKQRFEKQLQEEENVLQQQRRRLYKEVSEEKERLTQLAARQHAELEDLRKQLEDNSSLAGRALREELEKSRDEQERRHQVEIKALKERLEIEKQTWEENYMKKEEAWLLSRERELKEEVRRGRDKEIELAIQRLEVETREAREECERAADNRMKRVREKYEAELRDLERSERTSLQKQQEMREKHSEMEAELLRLQSLLRQREQEISDLTQVTARDKLSEERRSLSEVIRQEFAERLIELEEENRRMKMEVSEAKARLRLEVERVTREKEEELAEVHQRVKSAILKKEETVNNLRKQHEAAVKRADHLESLLEQQRKQLLGK</sequence>
<dbReference type="EMBL" id="CT573318">
    <property type="status" value="NOT_ANNOTATED_CDS"/>
    <property type="molecule type" value="Genomic_DNA"/>
</dbReference>
<dbReference type="EMBL" id="BC124167">
    <property type="protein sequence ID" value="AAI24168.1"/>
    <property type="molecule type" value="mRNA"/>
</dbReference>
<dbReference type="SMR" id="U3JAG9"/>
<dbReference type="FunCoup" id="U3JAG9">
    <property type="interactions" value="409"/>
</dbReference>
<dbReference type="STRING" id="7955.ENSDARP00000080097"/>
<dbReference type="PaxDb" id="7955-ENSDARP00000127237"/>
<dbReference type="Ensembl" id="ENSDART00000181478">
    <property type="protein sequence ID" value="ENSDARP00000150135"/>
    <property type="gene ID" value="ENSDARG00000109476"/>
</dbReference>
<dbReference type="AGR" id="ZFIN:ZDB-GENE-090508-16"/>
<dbReference type="ZFIN" id="ZDB-GENE-090508-16">
    <property type="gene designation" value="cep131"/>
</dbReference>
<dbReference type="eggNOG" id="ENOG502QT0Q">
    <property type="taxonomic scope" value="Eukaryota"/>
</dbReference>
<dbReference type="InParanoid" id="U3JAG9"/>
<dbReference type="OMA" id="MHKERDR"/>
<dbReference type="PRO" id="PR:U3JAG9"/>
<dbReference type="Proteomes" id="UP000000437">
    <property type="component" value="Unplaced"/>
</dbReference>
<dbReference type="GO" id="GO:0001669">
    <property type="term" value="C:acrosomal vesicle"/>
    <property type="evidence" value="ECO:0007669"/>
    <property type="project" value="UniProtKB-SubCell"/>
</dbReference>
<dbReference type="GO" id="GO:0034451">
    <property type="term" value="C:centriolar satellite"/>
    <property type="evidence" value="ECO:0000318"/>
    <property type="project" value="GO_Central"/>
</dbReference>
<dbReference type="GO" id="GO:0000775">
    <property type="term" value="C:chromosome, centromeric region"/>
    <property type="evidence" value="ECO:0007669"/>
    <property type="project" value="UniProtKB-SubCell"/>
</dbReference>
<dbReference type="GO" id="GO:0005929">
    <property type="term" value="C:cilium"/>
    <property type="evidence" value="ECO:0007669"/>
    <property type="project" value="GOC"/>
</dbReference>
<dbReference type="GO" id="GO:0005576">
    <property type="term" value="C:extracellular region"/>
    <property type="evidence" value="ECO:0007669"/>
    <property type="project" value="GOC"/>
</dbReference>
<dbReference type="GO" id="GO:0030154">
    <property type="term" value="P:cell differentiation"/>
    <property type="evidence" value="ECO:0007669"/>
    <property type="project" value="UniProtKB-KW"/>
</dbReference>
<dbReference type="GO" id="GO:0060271">
    <property type="term" value="P:cilium assembly"/>
    <property type="evidence" value="ECO:0000315"/>
    <property type="project" value="ZFIN"/>
</dbReference>
<dbReference type="GO" id="GO:0060287">
    <property type="term" value="P:epithelial cilium movement involved in determination of left/right asymmetry"/>
    <property type="evidence" value="ECO:0000315"/>
    <property type="project" value="ZFIN"/>
</dbReference>
<dbReference type="GO" id="GO:0035721">
    <property type="term" value="P:intraciliary retrograde transport"/>
    <property type="evidence" value="ECO:0000315"/>
    <property type="project" value="UniProtKB"/>
</dbReference>
<dbReference type="GO" id="GO:0035735">
    <property type="term" value="P:intraciliary transport involved in cilium assembly"/>
    <property type="evidence" value="ECO:0007669"/>
    <property type="project" value="InterPro"/>
</dbReference>
<dbReference type="GO" id="GO:0070121">
    <property type="term" value="P:Kupffer's vesicle development"/>
    <property type="evidence" value="ECO:0000315"/>
    <property type="project" value="UniProtKB"/>
</dbReference>
<dbReference type="GO" id="GO:0032402">
    <property type="term" value="P:melanosome transport"/>
    <property type="evidence" value="ECO:0000315"/>
    <property type="project" value="UniProtKB"/>
</dbReference>
<dbReference type="GO" id="GO:0090317">
    <property type="term" value="P:negative regulation of intracellular protein transport"/>
    <property type="evidence" value="ECO:0000315"/>
    <property type="project" value="UniProtKB"/>
</dbReference>
<dbReference type="GO" id="GO:0010824">
    <property type="term" value="P:regulation of centrosome duplication"/>
    <property type="evidence" value="ECO:0000318"/>
    <property type="project" value="GO_Central"/>
</dbReference>
<dbReference type="GO" id="GO:0050953">
    <property type="term" value="P:sensory perception of light stimulus"/>
    <property type="evidence" value="ECO:0000315"/>
    <property type="project" value="UniProtKB"/>
</dbReference>
<dbReference type="InterPro" id="IPR030465">
    <property type="entry name" value="CEP131"/>
</dbReference>
<dbReference type="PANTHER" id="PTHR31540">
    <property type="entry name" value="CENTROSOMAL PROTEIN OF 131 KDA"/>
    <property type="match status" value="1"/>
</dbReference>
<dbReference type="PANTHER" id="PTHR31540:SF1">
    <property type="entry name" value="CENTROSOMAL PROTEIN OF 131 KDA"/>
    <property type="match status" value="1"/>
</dbReference>
<gene>
    <name type="primary">cep131</name>
    <name type="synonym">azi1</name>
</gene>